<name>WHIA_LIMRJ</name>
<proteinExistence type="inferred from homology"/>
<keyword id="KW-0131">Cell cycle</keyword>
<keyword id="KW-0132">Cell division</keyword>
<keyword id="KW-0238">DNA-binding</keyword>
<feature type="chain" id="PRO_0000376505" description="Probable cell division protein WhiA">
    <location>
        <begin position="1"/>
        <end position="313"/>
    </location>
</feature>
<feature type="DNA-binding region" description="H-T-H motif" evidence="1">
    <location>
        <begin position="274"/>
        <end position="308"/>
    </location>
</feature>
<reference key="1">
    <citation type="journal article" date="2008" name="DNA Res.">
        <title>Comparative genome analysis of Lactobacillus reuteri and Lactobacillus fermentum reveal a genomic island for reuterin and cobalamin production.</title>
        <authorList>
            <person name="Morita H."/>
            <person name="Toh H."/>
            <person name="Fukuda S."/>
            <person name="Horikawa H."/>
            <person name="Oshima K."/>
            <person name="Suzuki T."/>
            <person name="Murakami M."/>
            <person name="Hisamatsu S."/>
            <person name="Kato Y."/>
            <person name="Takizawa T."/>
            <person name="Fukuoka H."/>
            <person name="Yoshimura T."/>
            <person name="Itoh K."/>
            <person name="O'Sullivan D.J."/>
            <person name="McKay L.L."/>
            <person name="Ohno H."/>
            <person name="Kikuchi J."/>
            <person name="Masaoka T."/>
            <person name="Hattori M."/>
        </authorList>
    </citation>
    <scope>NUCLEOTIDE SEQUENCE [LARGE SCALE GENOMIC DNA]</scope>
    <source>
        <strain>JCM 1112</strain>
    </source>
</reference>
<accession>B2G611</accession>
<organism>
    <name type="scientific">Limosilactobacillus reuteri subsp. reuteri (strain JCM 1112)</name>
    <name type="common">Lactobacillus reuteri</name>
    <dbReference type="NCBI Taxonomy" id="557433"/>
    <lineage>
        <taxon>Bacteria</taxon>
        <taxon>Bacillati</taxon>
        <taxon>Bacillota</taxon>
        <taxon>Bacilli</taxon>
        <taxon>Lactobacillales</taxon>
        <taxon>Lactobacillaceae</taxon>
        <taxon>Limosilactobacillus</taxon>
    </lineage>
</organism>
<gene>
    <name evidence="1" type="primary">whiA</name>
    <name type="ordered locus">LAR_0377</name>
</gene>
<protein>
    <recommendedName>
        <fullName evidence="1">Probable cell division protein WhiA</fullName>
    </recommendedName>
</protein>
<sequence length="313" mass="35727">MSYASEVKKELTGITVHRDNAKAELMALIRMNGSIGIADHQLVLNVQTENPAIARRIYSLLKQFYGVESEIVVRRKMKLKKNNQYIVRLRYHAQHVLDDLGILQNYQIKEQVPVELLKDEWMVRSYLRGAFLAGGSVNNPETSRYHLEIYSLYEEHNEIIAQMMNKFGLNAQTTARRSGFIVYLKEAEKIANFMSLIGATNSMLQFENVRIVRDMRNSVNRLVNCENANLNKIANASTRQIENIEFIDSRVGLSSLPDKLREIAETRLAHQEVSLKELGELVPGGPISKSGVNHRLRKLNAYADELRASEVKQ</sequence>
<comment type="function">
    <text evidence="1">Involved in cell division and chromosome segregation.</text>
</comment>
<comment type="similarity">
    <text evidence="1">Belongs to the WhiA family.</text>
</comment>
<evidence type="ECO:0000255" key="1">
    <source>
        <dbReference type="HAMAP-Rule" id="MF_01420"/>
    </source>
</evidence>
<dbReference type="EMBL" id="AP007281">
    <property type="protein sequence ID" value="BAG24893.1"/>
    <property type="molecule type" value="Genomic_DNA"/>
</dbReference>
<dbReference type="RefSeq" id="WP_003667466.1">
    <property type="nucleotide sequence ID" value="NC_010609.1"/>
</dbReference>
<dbReference type="SMR" id="B2G611"/>
<dbReference type="KEGG" id="lrf:LAR_0377"/>
<dbReference type="HOGENOM" id="CLU_053282_0_0_9"/>
<dbReference type="GO" id="GO:0003677">
    <property type="term" value="F:DNA binding"/>
    <property type="evidence" value="ECO:0007669"/>
    <property type="project" value="UniProtKB-UniRule"/>
</dbReference>
<dbReference type="GO" id="GO:0051301">
    <property type="term" value="P:cell division"/>
    <property type="evidence" value="ECO:0007669"/>
    <property type="project" value="UniProtKB-UniRule"/>
</dbReference>
<dbReference type="GO" id="GO:0043937">
    <property type="term" value="P:regulation of sporulation"/>
    <property type="evidence" value="ECO:0007669"/>
    <property type="project" value="InterPro"/>
</dbReference>
<dbReference type="Gene3D" id="3.10.28.10">
    <property type="entry name" value="Homing endonucleases"/>
    <property type="match status" value="1"/>
</dbReference>
<dbReference type="HAMAP" id="MF_01420">
    <property type="entry name" value="HTH_type_WhiA"/>
    <property type="match status" value="1"/>
</dbReference>
<dbReference type="InterPro" id="IPR027434">
    <property type="entry name" value="Homing_endonucl"/>
</dbReference>
<dbReference type="InterPro" id="IPR018478">
    <property type="entry name" value="Sporu_reg_WhiA_N_dom"/>
</dbReference>
<dbReference type="InterPro" id="IPR003802">
    <property type="entry name" value="Sporulation_regulator_WhiA"/>
</dbReference>
<dbReference type="InterPro" id="IPR023054">
    <property type="entry name" value="Sporulation_regulator_WhiA_C"/>
</dbReference>
<dbReference type="InterPro" id="IPR039518">
    <property type="entry name" value="WhiA_LAGLIDADG_dom"/>
</dbReference>
<dbReference type="NCBIfam" id="TIGR00647">
    <property type="entry name" value="DNA_bind_WhiA"/>
    <property type="match status" value="1"/>
</dbReference>
<dbReference type="PANTHER" id="PTHR37307">
    <property type="entry name" value="CELL DIVISION PROTEIN WHIA-RELATED"/>
    <property type="match status" value="1"/>
</dbReference>
<dbReference type="PANTHER" id="PTHR37307:SF1">
    <property type="entry name" value="CELL DIVISION PROTEIN WHIA-RELATED"/>
    <property type="match status" value="1"/>
</dbReference>
<dbReference type="Pfam" id="PF02650">
    <property type="entry name" value="HTH_WhiA"/>
    <property type="match status" value="1"/>
</dbReference>
<dbReference type="Pfam" id="PF14527">
    <property type="entry name" value="LAGLIDADG_WhiA"/>
    <property type="match status" value="1"/>
</dbReference>
<dbReference type="Pfam" id="PF10298">
    <property type="entry name" value="WhiA_N"/>
    <property type="match status" value="1"/>
</dbReference>
<dbReference type="SUPFAM" id="SSF55608">
    <property type="entry name" value="Homing endonucleases"/>
    <property type="match status" value="1"/>
</dbReference>